<organism>
    <name type="scientific">Vibrio campbellii (strain ATCC BAA-1116)</name>
    <dbReference type="NCBI Taxonomy" id="2902295"/>
    <lineage>
        <taxon>Bacteria</taxon>
        <taxon>Pseudomonadati</taxon>
        <taxon>Pseudomonadota</taxon>
        <taxon>Gammaproteobacteria</taxon>
        <taxon>Vibrionales</taxon>
        <taxon>Vibrionaceae</taxon>
        <taxon>Vibrio</taxon>
    </lineage>
</organism>
<dbReference type="EMBL" id="CP000789">
    <property type="protein sequence ID" value="ABU70792.1"/>
    <property type="molecule type" value="Genomic_DNA"/>
</dbReference>
<dbReference type="RefSeq" id="WP_005427511.1">
    <property type="nucleotide sequence ID" value="NC_022269.1"/>
</dbReference>
<dbReference type="SMR" id="A7MSW0"/>
<dbReference type="GeneID" id="47656298"/>
<dbReference type="KEGG" id="vha:VIBHAR_01823"/>
<dbReference type="PATRIC" id="fig|338187.25.peg.852"/>
<dbReference type="Proteomes" id="UP000008152">
    <property type="component" value="Chromosome I"/>
</dbReference>
<dbReference type="GO" id="GO:0005737">
    <property type="term" value="C:cytoplasm"/>
    <property type="evidence" value="ECO:0007669"/>
    <property type="project" value="UniProtKB-SubCell"/>
</dbReference>
<dbReference type="GO" id="GO:0005886">
    <property type="term" value="C:plasma membrane"/>
    <property type="evidence" value="ECO:0007669"/>
    <property type="project" value="UniProtKB-SubCell"/>
</dbReference>
<dbReference type="Gene3D" id="1.10.3890.10">
    <property type="entry name" value="HflD-like"/>
    <property type="match status" value="1"/>
</dbReference>
<dbReference type="HAMAP" id="MF_00695">
    <property type="entry name" value="HflD_protein"/>
    <property type="match status" value="1"/>
</dbReference>
<dbReference type="InterPro" id="IPR007451">
    <property type="entry name" value="HflD"/>
</dbReference>
<dbReference type="InterPro" id="IPR035932">
    <property type="entry name" value="HflD-like_sf"/>
</dbReference>
<dbReference type="NCBIfam" id="NF001246">
    <property type="entry name" value="PRK00218.1-2"/>
    <property type="match status" value="1"/>
</dbReference>
<dbReference type="NCBIfam" id="NF001248">
    <property type="entry name" value="PRK00218.1-4"/>
    <property type="match status" value="1"/>
</dbReference>
<dbReference type="PANTHER" id="PTHR38100">
    <property type="entry name" value="HIGH FREQUENCY LYSOGENIZATION PROTEIN HFLD"/>
    <property type="match status" value="1"/>
</dbReference>
<dbReference type="PANTHER" id="PTHR38100:SF1">
    <property type="entry name" value="HIGH FREQUENCY LYSOGENIZATION PROTEIN HFLD"/>
    <property type="match status" value="1"/>
</dbReference>
<dbReference type="Pfam" id="PF04356">
    <property type="entry name" value="DUF489"/>
    <property type="match status" value="1"/>
</dbReference>
<dbReference type="SUPFAM" id="SSF101322">
    <property type="entry name" value="YcfC-like"/>
    <property type="match status" value="1"/>
</dbReference>
<name>HFLD_VIBC1</name>
<keyword id="KW-0997">Cell inner membrane</keyword>
<keyword id="KW-1003">Cell membrane</keyword>
<keyword id="KW-0963">Cytoplasm</keyword>
<keyword id="KW-0472">Membrane</keyword>
<evidence type="ECO:0000255" key="1">
    <source>
        <dbReference type="HAMAP-Rule" id="MF_00695"/>
    </source>
</evidence>
<protein>
    <recommendedName>
        <fullName evidence="1">High frequency lysogenization protein HflD homolog</fullName>
    </recommendedName>
</protein>
<gene>
    <name evidence="1" type="primary">hflD</name>
    <name type="ordered locus">VIBHAR_01823</name>
</gene>
<comment type="subcellular location">
    <subcellularLocation>
        <location>Cytoplasm</location>
    </subcellularLocation>
    <subcellularLocation>
        <location evidence="1">Cell inner membrane</location>
        <topology evidence="1">Peripheral membrane protein</topology>
        <orientation evidence="1">Cytoplasmic side</orientation>
    </subcellularLocation>
</comment>
<comment type="similarity">
    <text evidence="1">Belongs to the HflD family.</text>
</comment>
<accession>A7MSW0</accession>
<proteinExistence type="inferred from homology"/>
<sequence length="205" mass="22590">MANTLYDRTIAFAGICQAVALVQQVARDGHCDQDAFETSINAILNTSPANTIGVFGREADLKLGLECLVKGIDSTPSGSEVTRYIISLMALERKLSGRNDAMSQLGDRIQMAQRQTEHFELLDDQMISNLASIYLDVVSPIGPRIQVTGTPSVLQQTSNQHKVRALLLSGIRSAVLWRQVGGKRRHLIFGRKKMVEQAQILLARM</sequence>
<reference key="1">
    <citation type="submission" date="2007-08" db="EMBL/GenBank/DDBJ databases">
        <authorList>
            <consortium name="The Vibrio harveyi Genome Sequencing Project"/>
            <person name="Bassler B."/>
            <person name="Clifton S.W."/>
            <person name="Fulton L."/>
            <person name="Delehaunty K."/>
            <person name="Fronick C."/>
            <person name="Harrison M."/>
            <person name="Markivic C."/>
            <person name="Fulton R."/>
            <person name="Tin-Wollam A.-M."/>
            <person name="Shah N."/>
            <person name="Pepin K."/>
            <person name="Nash W."/>
            <person name="Thiruvilangam P."/>
            <person name="Bhonagiri V."/>
            <person name="Waters C."/>
            <person name="Tu K.C."/>
            <person name="Irgon J."/>
            <person name="Wilson R.K."/>
        </authorList>
    </citation>
    <scope>NUCLEOTIDE SEQUENCE [LARGE SCALE GENOMIC DNA]</scope>
    <source>
        <strain>ATCC BAA-1116 / BB120</strain>
    </source>
</reference>
<feature type="chain" id="PRO_1000045452" description="High frequency lysogenization protein HflD homolog">
    <location>
        <begin position="1"/>
        <end position="205"/>
    </location>
</feature>